<gene>
    <name evidence="1" type="primary">rpl14</name>
    <name type="ordered locus">Grc000091</name>
</gene>
<reference key="1">
    <citation type="journal article" date="2004" name="J. Mol. Evol.">
        <title>Comparative analysis of the complete plastid genome sequence of the red alga Gracilaria tenuistipitata var. liui provides insights into the evolution of rhodoplasts and their relationship to other plastids.</title>
        <authorList>
            <person name="Hagopian J.C."/>
            <person name="Reis M."/>
            <person name="Kitajima J.P."/>
            <person name="Bhattacharya D."/>
            <person name="de Oliveira M.C."/>
        </authorList>
    </citation>
    <scope>NUCLEOTIDE SEQUENCE [LARGE SCALE GENOMIC DNA]</scope>
</reference>
<name>RK14_GRATL</name>
<accession>Q6B8W3</accession>
<feature type="chain" id="PRO_0000276374" description="Large ribosomal subunit protein uL14c">
    <location>
        <begin position="1"/>
        <end position="122"/>
    </location>
</feature>
<sequence>MIQIQSYLNIADNSGARKIMCIQVLGSNNPHYANIGDIIIGVVKDALPNMPIKKSDIIRAVIVRTKKTIRRNDGMSIRFDDNAAVIINQENNPRGTRVFGPIAKELRDKNFSKIISLAAEVV</sequence>
<geneLocation type="chloroplast"/>
<dbReference type="EMBL" id="AY673996">
    <property type="protein sequence ID" value="AAT79672.1"/>
    <property type="molecule type" value="Genomic_DNA"/>
</dbReference>
<dbReference type="RefSeq" id="YP_063597.1">
    <property type="nucleotide sequence ID" value="NC_006137.1"/>
</dbReference>
<dbReference type="SMR" id="Q6B8W3"/>
<dbReference type="GeneID" id="2944128"/>
<dbReference type="GO" id="GO:0009507">
    <property type="term" value="C:chloroplast"/>
    <property type="evidence" value="ECO:0007669"/>
    <property type="project" value="UniProtKB-SubCell"/>
</dbReference>
<dbReference type="GO" id="GO:0022625">
    <property type="term" value="C:cytosolic large ribosomal subunit"/>
    <property type="evidence" value="ECO:0007669"/>
    <property type="project" value="TreeGrafter"/>
</dbReference>
<dbReference type="GO" id="GO:0070180">
    <property type="term" value="F:large ribosomal subunit rRNA binding"/>
    <property type="evidence" value="ECO:0007669"/>
    <property type="project" value="TreeGrafter"/>
</dbReference>
<dbReference type="GO" id="GO:0003735">
    <property type="term" value="F:structural constituent of ribosome"/>
    <property type="evidence" value="ECO:0007669"/>
    <property type="project" value="InterPro"/>
</dbReference>
<dbReference type="GO" id="GO:0006412">
    <property type="term" value="P:translation"/>
    <property type="evidence" value="ECO:0007669"/>
    <property type="project" value="UniProtKB-UniRule"/>
</dbReference>
<dbReference type="CDD" id="cd00337">
    <property type="entry name" value="Ribosomal_uL14"/>
    <property type="match status" value="1"/>
</dbReference>
<dbReference type="FunFam" id="2.40.150.20:FF:000001">
    <property type="entry name" value="50S ribosomal protein L14"/>
    <property type="match status" value="1"/>
</dbReference>
<dbReference type="Gene3D" id="2.40.150.20">
    <property type="entry name" value="Ribosomal protein L14"/>
    <property type="match status" value="1"/>
</dbReference>
<dbReference type="HAMAP" id="MF_01367">
    <property type="entry name" value="Ribosomal_uL14"/>
    <property type="match status" value="1"/>
</dbReference>
<dbReference type="InterPro" id="IPR000218">
    <property type="entry name" value="Ribosomal_uL14"/>
</dbReference>
<dbReference type="InterPro" id="IPR005745">
    <property type="entry name" value="Ribosomal_uL14_bac-type"/>
</dbReference>
<dbReference type="InterPro" id="IPR019972">
    <property type="entry name" value="Ribosomal_uL14_CS"/>
</dbReference>
<dbReference type="InterPro" id="IPR036853">
    <property type="entry name" value="Ribosomal_uL14_sf"/>
</dbReference>
<dbReference type="NCBIfam" id="TIGR01067">
    <property type="entry name" value="rplN_bact"/>
    <property type="match status" value="1"/>
</dbReference>
<dbReference type="PANTHER" id="PTHR11761">
    <property type="entry name" value="50S/60S RIBOSOMAL PROTEIN L14/L23"/>
    <property type="match status" value="1"/>
</dbReference>
<dbReference type="PANTHER" id="PTHR11761:SF3">
    <property type="entry name" value="LARGE RIBOSOMAL SUBUNIT PROTEIN UL14M"/>
    <property type="match status" value="1"/>
</dbReference>
<dbReference type="Pfam" id="PF00238">
    <property type="entry name" value="Ribosomal_L14"/>
    <property type="match status" value="1"/>
</dbReference>
<dbReference type="SMART" id="SM01374">
    <property type="entry name" value="Ribosomal_L14"/>
    <property type="match status" value="1"/>
</dbReference>
<dbReference type="SUPFAM" id="SSF50193">
    <property type="entry name" value="Ribosomal protein L14"/>
    <property type="match status" value="1"/>
</dbReference>
<dbReference type="PROSITE" id="PS00049">
    <property type="entry name" value="RIBOSOMAL_L14"/>
    <property type="match status" value="1"/>
</dbReference>
<comment type="function">
    <text evidence="1">Binds to 23S rRNA.</text>
</comment>
<comment type="subunit">
    <text evidence="1">Part of the 50S ribosomal subunit.</text>
</comment>
<comment type="subcellular location">
    <subcellularLocation>
        <location>Plastid</location>
        <location>Chloroplast</location>
    </subcellularLocation>
</comment>
<comment type="similarity">
    <text evidence="1">Belongs to the universal ribosomal protein uL14 family.</text>
</comment>
<protein>
    <recommendedName>
        <fullName evidence="1">Large ribosomal subunit protein uL14c</fullName>
    </recommendedName>
    <alternativeName>
        <fullName evidence="2">50S ribosomal protein L14, chloroplastic</fullName>
    </alternativeName>
</protein>
<organism>
    <name type="scientific">Gracilaria tenuistipitata var. liui</name>
    <name type="common">Red alga</name>
    <dbReference type="NCBI Taxonomy" id="285951"/>
    <lineage>
        <taxon>Eukaryota</taxon>
        <taxon>Rhodophyta</taxon>
        <taxon>Florideophyceae</taxon>
        <taxon>Rhodymeniophycidae</taxon>
        <taxon>Gracilariales</taxon>
        <taxon>Gracilariaceae</taxon>
        <taxon>Gracilaria</taxon>
        <taxon>Gracilaria tenuistipitata</taxon>
    </lineage>
</organism>
<keyword id="KW-0150">Chloroplast</keyword>
<keyword id="KW-0934">Plastid</keyword>
<keyword id="KW-0687">Ribonucleoprotein</keyword>
<keyword id="KW-0689">Ribosomal protein</keyword>
<keyword id="KW-0694">RNA-binding</keyword>
<keyword id="KW-0699">rRNA-binding</keyword>
<evidence type="ECO:0000255" key="1">
    <source>
        <dbReference type="HAMAP-Rule" id="MF_01367"/>
    </source>
</evidence>
<evidence type="ECO:0000305" key="2"/>
<proteinExistence type="inferred from homology"/>